<sequence>MNTFLLLLTISLLVVVQIQTGDLGQNSTAVTTPANKAATTAAATTKAAATTATKTTTAVRKTPGKPPKAGASSITDVGACTFLFFANTLMCLFYLS</sequence>
<keyword id="KW-1003">Cell membrane</keyword>
<keyword id="KW-0325">Glycoprotein</keyword>
<keyword id="KW-0336">GPI-anchor</keyword>
<keyword id="KW-0449">Lipoprotein</keyword>
<keyword id="KW-0472">Membrane</keyword>
<keyword id="KW-1185">Reference proteome</keyword>
<keyword id="KW-0732">Signal</keyword>
<comment type="function">
    <text>May play a role in carrying and orienting carbohydrate, as well as having a more specific role.</text>
</comment>
<comment type="subcellular location">
    <subcellularLocation>
        <location>Cell membrane</location>
        <topology>Lipid-anchor</topology>
        <topology>GPI-anchor</topology>
    </subcellularLocation>
</comment>
<dbReference type="EMBL" id="X76697">
    <property type="protein sequence ID" value="CAA54126.1"/>
    <property type="molecule type" value="mRNA"/>
</dbReference>
<dbReference type="PIR" id="I84696">
    <property type="entry name" value="S40081"/>
</dbReference>
<dbReference type="RefSeq" id="NP_446435.1">
    <property type="nucleotide sequence ID" value="NM_053983.1"/>
</dbReference>
<dbReference type="FunCoup" id="Q63064">
    <property type="interactions" value="1"/>
</dbReference>
<dbReference type="STRING" id="10116.ENSRNOP00000020688"/>
<dbReference type="GlyCosmos" id="Q63064">
    <property type="glycosylation" value="1 site, No reported glycans"/>
</dbReference>
<dbReference type="GlyGen" id="Q63064">
    <property type="glycosylation" value="1 site"/>
</dbReference>
<dbReference type="PaxDb" id="10116-ENSRNOP00000020688"/>
<dbReference type="GeneID" id="117054"/>
<dbReference type="KEGG" id="rno:117054"/>
<dbReference type="UCSC" id="RGD:620627">
    <property type="organism name" value="rat"/>
</dbReference>
<dbReference type="AGR" id="RGD:620627"/>
<dbReference type="CTD" id="1043"/>
<dbReference type="RGD" id="620627">
    <property type="gene designation" value="Cd52"/>
</dbReference>
<dbReference type="eggNOG" id="ENOG502TM88">
    <property type="taxonomic scope" value="Eukaryota"/>
</dbReference>
<dbReference type="InParanoid" id="Q63064"/>
<dbReference type="Reactome" id="R-RNO-163125">
    <property type="pathway name" value="Post-translational modification: synthesis of GPI-anchored proteins"/>
</dbReference>
<dbReference type="PRO" id="PR:Q63064"/>
<dbReference type="Proteomes" id="UP000002494">
    <property type="component" value="Unplaced"/>
</dbReference>
<dbReference type="GO" id="GO:0005886">
    <property type="term" value="C:plasma membrane"/>
    <property type="evidence" value="ECO:0007669"/>
    <property type="project" value="UniProtKB-SubCell"/>
</dbReference>
<dbReference type="GO" id="GO:0098552">
    <property type="term" value="C:side of membrane"/>
    <property type="evidence" value="ECO:0007669"/>
    <property type="project" value="UniProtKB-KW"/>
</dbReference>
<dbReference type="GO" id="GO:0097225">
    <property type="term" value="C:sperm midpiece"/>
    <property type="evidence" value="ECO:0000266"/>
    <property type="project" value="RGD"/>
</dbReference>
<dbReference type="GO" id="GO:0007204">
    <property type="term" value="P:positive regulation of cytosolic calcium ion concentration"/>
    <property type="evidence" value="ECO:0000266"/>
    <property type="project" value="RGD"/>
</dbReference>
<dbReference type="GO" id="GO:0009617">
    <property type="term" value="P:response to bacterium"/>
    <property type="evidence" value="ECO:0000266"/>
    <property type="project" value="RGD"/>
</dbReference>
<dbReference type="InterPro" id="IPR026643">
    <property type="entry name" value="CAMPATH-1"/>
</dbReference>
<dbReference type="PANTHER" id="PTHR15029">
    <property type="entry name" value="CAMPATH-1 ANTIGEN"/>
    <property type="match status" value="1"/>
</dbReference>
<dbReference type="PANTHER" id="PTHR15029:SF0">
    <property type="entry name" value="CAMPATH-1 ANTIGEN"/>
    <property type="match status" value="1"/>
</dbReference>
<dbReference type="Pfam" id="PF15116">
    <property type="entry name" value="CD52"/>
    <property type="match status" value="1"/>
</dbReference>
<evidence type="ECO:0000255" key="1"/>
<proteinExistence type="inferred from homology"/>
<name>CD52_RAT</name>
<protein>
    <recommendedName>
        <fullName>CAMPATH-1 antigen</fullName>
    </recommendedName>
    <alternativeName>
        <fullName>Lymphocyte differentiation antigen B7</fullName>
    </alternativeName>
    <cdAntigenName>CD52</cdAntigenName>
</protein>
<organism>
    <name type="scientific">Rattus norvegicus</name>
    <name type="common">Rat</name>
    <dbReference type="NCBI Taxonomy" id="10116"/>
    <lineage>
        <taxon>Eukaryota</taxon>
        <taxon>Metazoa</taxon>
        <taxon>Chordata</taxon>
        <taxon>Craniata</taxon>
        <taxon>Vertebrata</taxon>
        <taxon>Euteleostomi</taxon>
        <taxon>Mammalia</taxon>
        <taxon>Eutheria</taxon>
        <taxon>Euarchontoglires</taxon>
        <taxon>Glires</taxon>
        <taxon>Rodentia</taxon>
        <taxon>Myomorpha</taxon>
        <taxon>Muroidea</taxon>
        <taxon>Muridae</taxon>
        <taxon>Murinae</taxon>
        <taxon>Rattus</taxon>
    </lineage>
</organism>
<accession>Q63064</accession>
<gene>
    <name type="primary">Cd52</name>
    <name type="synonym">Cdw52</name>
    <name type="synonym">Rb7</name>
</gene>
<feature type="signal peptide" evidence="1">
    <location>
        <begin position="1"/>
        <end position="23"/>
    </location>
</feature>
<feature type="peptide" id="PRO_0000020910" description="CAMPATH-1 antigen">
    <location>
        <begin position="24"/>
        <end position="70"/>
    </location>
</feature>
<feature type="propeptide" id="PRO_0000020911" description="Removed in mature form" evidence="1">
    <location>
        <begin position="71"/>
        <end position="96"/>
    </location>
</feature>
<feature type="lipid moiety-binding region" description="GPI-anchor amidated glycine" evidence="1">
    <location>
        <position position="70"/>
    </location>
</feature>
<feature type="glycosylation site" description="N-linked (GlcNAc...) asparagine" evidence="1">
    <location>
        <position position="26"/>
    </location>
</feature>
<reference key="1">
    <citation type="journal article" date="1994" name="Biol. Reprod.">
        <title>A major messenger ribonucleic acid of the rodent epididymis encodes a small glycosylphosphatidylinositol-anchored lymphocyte surface antigen.</title>
        <authorList>
            <person name="Kirchhoff C."/>
        </authorList>
    </citation>
    <scope>NUCLEOTIDE SEQUENCE [MRNA]</scope>
    <source>
        <strain>Wistar</strain>
        <tissue>Epididymis</tissue>
    </source>
</reference>